<name>GLPB_VIBC3</name>
<dbReference type="EC" id="1.1.5.3" evidence="1"/>
<dbReference type="EMBL" id="CP000626">
    <property type="protein sequence ID" value="ABQ18464.1"/>
    <property type="molecule type" value="Genomic_DNA"/>
</dbReference>
<dbReference type="EMBL" id="CP001236">
    <property type="protein sequence ID" value="ACP11399.1"/>
    <property type="molecule type" value="Genomic_DNA"/>
</dbReference>
<dbReference type="RefSeq" id="WP_000972327.1">
    <property type="nucleotide sequence ID" value="NZ_JAACZH010000025.1"/>
</dbReference>
<dbReference type="KEGG" id="vco:VC0395_0687"/>
<dbReference type="KEGG" id="vcr:VC395_A0565"/>
<dbReference type="PATRIC" id="fig|345073.21.peg.3306"/>
<dbReference type="eggNOG" id="COG3075">
    <property type="taxonomic scope" value="Bacteria"/>
</dbReference>
<dbReference type="HOGENOM" id="CLU_047793_0_0_6"/>
<dbReference type="OrthoDB" id="6395323at2"/>
<dbReference type="UniPathway" id="UPA00618">
    <property type="reaction ID" value="UER00673"/>
</dbReference>
<dbReference type="Proteomes" id="UP000000249">
    <property type="component" value="Chromosome 1"/>
</dbReference>
<dbReference type="GO" id="GO:0009331">
    <property type="term" value="C:glycerol-3-phosphate dehydrogenase (FAD) complex"/>
    <property type="evidence" value="ECO:0007669"/>
    <property type="project" value="InterPro"/>
</dbReference>
<dbReference type="GO" id="GO:0004368">
    <property type="term" value="F:glycerol-3-phosphate dehydrogenase (quinone) activity"/>
    <property type="evidence" value="ECO:0007669"/>
    <property type="project" value="UniProtKB-UniRule"/>
</dbReference>
<dbReference type="GO" id="GO:0019563">
    <property type="term" value="P:glycerol catabolic process"/>
    <property type="evidence" value="ECO:0007669"/>
    <property type="project" value="UniProtKB-UniRule"/>
</dbReference>
<dbReference type="Gene3D" id="3.50.50.60">
    <property type="entry name" value="FAD/NAD(P)-binding domain"/>
    <property type="match status" value="1"/>
</dbReference>
<dbReference type="HAMAP" id="MF_00753">
    <property type="entry name" value="Glycerol3P_GlpB"/>
    <property type="match status" value="1"/>
</dbReference>
<dbReference type="InterPro" id="IPR003953">
    <property type="entry name" value="FAD-dep_OxRdtase_2_FAD-bd"/>
</dbReference>
<dbReference type="InterPro" id="IPR036188">
    <property type="entry name" value="FAD/NAD-bd_sf"/>
</dbReference>
<dbReference type="InterPro" id="IPR009158">
    <property type="entry name" value="G3P_DH_GlpB_su"/>
</dbReference>
<dbReference type="InterPro" id="IPR051691">
    <property type="entry name" value="Metab_Enz_Cyan_OpOx_G3PDH"/>
</dbReference>
<dbReference type="NCBIfam" id="TIGR03378">
    <property type="entry name" value="glycerol3P_GlpB"/>
    <property type="match status" value="1"/>
</dbReference>
<dbReference type="NCBIfam" id="NF003719">
    <property type="entry name" value="PRK05329.1-2"/>
    <property type="match status" value="1"/>
</dbReference>
<dbReference type="NCBIfam" id="NF003720">
    <property type="entry name" value="PRK05329.1-3"/>
    <property type="match status" value="1"/>
</dbReference>
<dbReference type="PANTHER" id="PTHR42949">
    <property type="entry name" value="ANAEROBIC GLYCEROL-3-PHOSPHATE DEHYDROGENASE SUBUNIT B"/>
    <property type="match status" value="1"/>
</dbReference>
<dbReference type="PANTHER" id="PTHR42949:SF3">
    <property type="entry name" value="ANAEROBIC GLYCEROL-3-PHOSPHATE DEHYDROGENASE SUBUNIT B"/>
    <property type="match status" value="1"/>
</dbReference>
<dbReference type="Pfam" id="PF00890">
    <property type="entry name" value="FAD_binding_2"/>
    <property type="match status" value="1"/>
</dbReference>
<dbReference type="PIRSF" id="PIRSF000141">
    <property type="entry name" value="Anaerobic_G3P_dh"/>
    <property type="match status" value="1"/>
</dbReference>
<dbReference type="SUPFAM" id="SSF51905">
    <property type="entry name" value="FAD/NAD(P)-binding domain"/>
    <property type="match status" value="1"/>
</dbReference>
<protein>
    <recommendedName>
        <fullName evidence="1">Anaerobic glycerol-3-phosphate dehydrogenase subunit B</fullName>
        <shortName evidence="1">Anaerobic G-3-P dehydrogenase subunit B</shortName>
        <shortName evidence="1">Anaerobic G3Pdhase B</shortName>
        <ecNumber evidence="1">1.1.5.3</ecNumber>
    </recommendedName>
</protein>
<proteinExistence type="inferred from homology"/>
<accession>A5EZR7</accession>
<accession>C3M5I6</accession>
<evidence type="ECO:0000255" key="1">
    <source>
        <dbReference type="HAMAP-Rule" id="MF_00753"/>
    </source>
</evidence>
<comment type="function">
    <text evidence="1">Conversion of glycerol 3-phosphate to dihydroxyacetone. Uses fumarate or nitrate as electron acceptor.</text>
</comment>
<comment type="catalytic activity">
    <reaction evidence="1">
        <text>a quinone + sn-glycerol 3-phosphate = dihydroxyacetone phosphate + a quinol</text>
        <dbReference type="Rhea" id="RHEA:18977"/>
        <dbReference type="ChEBI" id="CHEBI:24646"/>
        <dbReference type="ChEBI" id="CHEBI:57597"/>
        <dbReference type="ChEBI" id="CHEBI:57642"/>
        <dbReference type="ChEBI" id="CHEBI:132124"/>
        <dbReference type="EC" id="1.1.5.3"/>
    </reaction>
</comment>
<comment type="cofactor">
    <cofactor evidence="1">
        <name>FMN</name>
        <dbReference type="ChEBI" id="CHEBI:58210"/>
    </cofactor>
</comment>
<comment type="pathway">
    <text evidence="1">Polyol metabolism; glycerol degradation via glycerol kinase pathway; glycerone phosphate from sn-glycerol 3-phosphate (anaerobic route): step 1/1.</text>
</comment>
<comment type="subunit">
    <text evidence="1">Composed of a catalytic GlpA/B dimer and of membrane bound GlpC.</text>
</comment>
<comment type="similarity">
    <text evidence="1">Belongs to the anaerobic G-3-P dehydrogenase subunit B family.</text>
</comment>
<reference key="1">
    <citation type="submission" date="2007-03" db="EMBL/GenBank/DDBJ databases">
        <authorList>
            <person name="Heidelberg J."/>
        </authorList>
    </citation>
    <scope>NUCLEOTIDE SEQUENCE [LARGE SCALE GENOMIC DNA]</scope>
    <source>
        <strain>ATCC 39541 / Classical Ogawa 395 / O395</strain>
    </source>
</reference>
<reference key="2">
    <citation type="journal article" date="2008" name="PLoS ONE">
        <title>A recalibrated molecular clock and independent origins for the cholera pandemic clones.</title>
        <authorList>
            <person name="Feng L."/>
            <person name="Reeves P.R."/>
            <person name="Lan R."/>
            <person name="Ren Y."/>
            <person name="Gao C."/>
            <person name="Zhou Z."/>
            <person name="Ren Y."/>
            <person name="Cheng J."/>
            <person name="Wang W."/>
            <person name="Wang J."/>
            <person name="Qian W."/>
            <person name="Li D."/>
            <person name="Wang L."/>
        </authorList>
    </citation>
    <scope>NUCLEOTIDE SEQUENCE [LARGE SCALE GENOMIC DNA]</scope>
    <source>
        <strain>ATCC 39541 / Classical Ogawa 395 / O395</strain>
    </source>
</reference>
<gene>
    <name evidence="1" type="primary">glpB</name>
    <name type="ordered locus">VC0395_0687</name>
    <name type="ordered locus">VC395_A0565</name>
</gene>
<sequence length="436" mass="48030">MMHYDVAVIGGGIAGYSAALRALQAGKKVVLINQGQSALHFSSGSIDVLGRLPDGSVVNQPFDALSALQQQVPEHPYSKVGRKNSEKGLMWFKRTLDSAHVPLHHEPDGANHWRITPLGTLKNTWLSQPFVYPYRGNADFSRIVIVAIDGYRDFQPAMLRDNLAQRPELANTPMLTVNVSIPGFEGFRRNPNELRSIDIARLLRQESAWNALCDQLMRVARPDDLVIMPAIMGNGDGLHLMTKLQQVTQLRFHEVPTMPPSLLGIRIEEALHRSFIQGGGVQLKGDKVIGGDFAGSRLTAIHTQNLRDFPISAEHYVMATGSYFSQGLQASQHAIQEPTFALDVQQNPDRAQWRHAQFIAAQSHPFMTFGVITDANLHPSRQGKTIDNLWCCGAMLSGYDPVFEGCGGGVAIATAYHAVEQILATYAQTKQPEVLL</sequence>
<feature type="chain" id="PRO_1000072826" description="Anaerobic glycerol-3-phosphate dehydrogenase subunit B">
    <location>
        <begin position="1"/>
        <end position="436"/>
    </location>
</feature>
<keyword id="KW-0285">Flavoprotein</keyword>
<keyword id="KW-0288">FMN</keyword>
<keyword id="KW-0560">Oxidoreductase</keyword>
<organism>
    <name type="scientific">Vibrio cholerae serotype O1 (strain ATCC 39541 / Classical Ogawa 395 / O395)</name>
    <dbReference type="NCBI Taxonomy" id="345073"/>
    <lineage>
        <taxon>Bacteria</taxon>
        <taxon>Pseudomonadati</taxon>
        <taxon>Pseudomonadota</taxon>
        <taxon>Gammaproteobacteria</taxon>
        <taxon>Vibrionales</taxon>
        <taxon>Vibrionaceae</taxon>
        <taxon>Vibrio</taxon>
    </lineage>
</organism>